<name>DABA_MARN8</name>
<keyword id="KW-0997">Cell inner membrane</keyword>
<keyword id="KW-1003">Cell membrane</keyword>
<keyword id="KW-0472">Membrane</keyword>
<keyword id="KW-0479">Metal-binding</keyword>
<keyword id="KW-0813">Transport</keyword>
<keyword id="KW-0862">Zinc</keyword>
<comment type="function">
    <text evidence="1">Part of an energy-coupled inorganic carbon pump.</text>
</comment>
<comment type="cofactor">
    <cofactor evidence="1">
        <name>Zn(2+)</name>
        <dbReference type="ChEBI" id="CHEBI:29105"/>
    </cofactor>
</comment>
<comment type="subunit">
    <text evidence="1">Forms a complex with DabB.</text>
</comment>
<comment type="subcellular location">
    <subcellularLocation>
        <location evidence="1">Cell inner membrane</location>
        <topology evidence="1">Peripheral membrane protein</topology>
    </subcellularLocation>
</comment>
<comment type="similarity">
    <text evidence="1">Belongs to the inorganic carbon transporter (TC 9.A.2) DabA family.</text>
</comment>
<dbReference type="EMBL" id="CP000514">
    <property type="protein sequence ID" value="ABM18457.1"/>
    <property type="molecule type" value="Genomic_DNA"/>
</dbReference>
<dbReference type="RefSeq" id="WP_011784861.1">
    <property type="nucleotide sequence ID" value="NC_008740.1"/>
</dbReference>
<dbReference type="STRING" id="351348.Maqu_1369"/>
<dbReference type="KEGG" id="maq:Maqu_1369"/>
<dbReference type="eggNOG" id="COG3002">
    <property type="taxonomic scope" value="Bacteria"/>
</dbReference>
<dbReference type="HOGENOM" id="CLU_009885_1_0_6"/>
<dbReference type="OrthoDB" id="9805101at2"/>
<dbReference type="Proteomes" id="UP000000998">
    <property type="component" value="Chromosome"/>
</dbReference>
<dbReference type="GO" id="GO:0005886">
    <property type="term" value="C:plasma membrane"/>
    <property type="evidence" value="ECO:0007669"/>
    <property type="project" value="UniProtKB-SubCell"/>
</dbReference>
<dbReference type="GO" id="GO:0008270">
    <property type="term" value="F:zinc ion binding"/>
    <property type="evidence" value="ECO:0007669"/>
    <property type="project" value="UniProtKB-UniRule"/>
</dbReference>
<dbReference type="HAMAP" id="MF_01871">
    <property type="entry name" value="DabA"/>
    <property type="match status" value="1"/>
</dbReference>
<dbReference type="InterPro" id="IPR018752">
    <property type="entry name" value="DabA"/>
</dbReference>
<dbReference type="PANTHER" id="PTHR38344:SF1">
    <property type="entry name" value="INORGANIC CARBON TRANSPORTER SUBUNIT DABA-RELATED"/>
    <property type="match status" value="1"/>
</dbReference>
<dbReference type="PANTHER" id="PTHR38344">
    <property type="entry name" value="UPF0753 PROTEIN AQ_863"/>
    <property type="match status" value="1"/>
</dbReference>
<dbReference type="Pfam" id="PF10070">
    <property type="entry name" value="DabA"/>
    <property type="match status" value="1"/>
</dbReference>
<evidence type="ECO:0000255" key="1">
    <source>
        <dbReference type="HAMAP-Rule" id="MF_01871"/>
    </source>
</evidence>
<protein>
    <recommendedName>
        <fullName evidence="1">Probable inorganic carbon transporter subunit DabA</fullName>
    </recommendedName>
</protein>
<gene>
    <name evidence="1" type="primary">dabA</name>
    <name type="ordered locus">Maqu_1369</name>
</gene>
<reference key="1">
    <citation type="journal article" date="2011" name="Appl. Environ. Microbiol.">
        <title>Genomic potential of Marinobacter aquaeolei, a biogeochemical 'opportunitroph'.</title>
        <authorList>
            <person name="Singer E."/>
            <person name="Webb E.A."/>
            <person name="Nelson W.C."/>
            <person name="Heidelberg J.F."/>
            <person name="Ivanova N."/>
            <person name="Pati A."/>
            <person name="Edwards K.J."/>
        </authorList>
    </citation>
    <scope>NUCLEOTIDE SEQUENCE [LARGE SCALE GENOMIC DNA]</scope>
    <source>
        <strain>ATCC 700491 / DSM 11845 / VT8</strain>
    </source>
</reference>
<accession>A1U0D8</accession>
<organism>
    <name type="scientific">Marinobacter nauticus (strain ATCC 700491 / DSM 11845 / VT8)</name>
    <name type="common">Marinobacter aquaeolei</name>
    <dbReference type="NCBI Taxonomy" id="351348"/>
    <lineage>
        <taxon>Bacteria</taxon>
        <taxon>Pseudomonadati</taxon>
        <taxon>Pseudomonadota</taxon>
        <taxon>Gammaproteobacteria</taxon>
        <taxon>Pseudomonadales</taxon>
        <taxon>Marinobacteraceae</taxon>
        <taxon>Marinobacter</taxon>
    </lineage>
</organism>
<sequence length="801" mass="89288">MNAPVTYSASCEQVIPELVNEACERIAPIWPLDRWIAVNPWWGSRTGPVEKVSRELDNLFGAGLLMPPAFYREAWDGGRIQRPHLEEAAREAGLKDDSQALLAQLSGAASNQPGFVSALGYTRRGQQEPPLEEVREEIGRACARYFDLRQNRWRVSGTKQDLYQFWLSQSGRSLARKASVEMLLKPDWQEAAATVARELPYSSRQLPLVIHHLLGHLLGWASWCRGVDWRAALGDPHESGTEHFCAQLATIWLIHEAHALINMTEAERESWQNRYVNAFDLAPASANEQALWIWHRAYELAWQSRFLDDIRSSERSSLAEPDPVAEVQAAFCIDVRSEVIRRQLEKVYPEIRTLGVAGFFGMPIVHHRHGPTDDEARLPGLLAPVYRYSETLGSPSEDRELDRKLDSREQVRESVRRAKYSSLSTFTLVETTGLAWAWKLVRDSLNRNSAKAEAVEPGRLHHCVDGYPLSDPERVNLAEGLLRAMSLTKGFASVLLLVGHGAHTDNNPNEAGLACGACGGKNGGVNARVAAELLNDRQVRAGLAERGIVMPESTIALAAEHCTITDRITIYGRDQVPDSHQRVFNTLVEKLEAAGQACRRERATSLGLNGKTDDDLLAELKRRTRNWAEVRPEWGLANNAGMVIGPRSLTRSLDLGGRCFLHDYDPSQDPSGEVLTLLMSAPMVVANWINLQYFGSVARPDIFGAGNKLLHSVVGGNLGVVEGNGVDLKIGLPLQSVFDGEHWRHEPMRLAVVVDAPAERIEAVIRGNADVRALVENRWLWLHRVEGDQTLRYDDGRWVTT</sequence>
<feature type="chain" id="PRO_0000387273" description="Probable inorganic carbon transporter subunit DabA">
    <location>
        <begin position="1"/>
        <end position="801"/>
    </location>
</feature>
<feature type="binding site" evidence="1">
    <location>
        <position position="332"/>
    </location>
    <ligand>
        <name>Zn(2+)</name>
        <dbReference type="ChEBI" id="CHEBI:29105"/>
    </ligand>
</feature>
<feature type="binding site" evidence="1">
    <location>
        <position position="334"/>
    </location>
    <ligand>
        <name>Zn(2+)</name>
        <dbReference type="ChEBI" id="CHEBI:29105"/>
    </ligand>
</feature>
<feature type="binding site" evidence="1">
    <location>
        <position position="500"/>
    </location>
    <ligand>
        <name>Zn(2+)</name>
        <dbReference type="ChEBI" id="CHEBI:29105"/>
    </ligand>
</feature>
<feature type="binding site" evidence="1">
    <location>
        <position position="515"/>
    </location>
    <ligand>
        <name>Zn(2+)</name>
        <dbReference type="ChEBI" id="CHEBI:29105"/>
    </ligand>
</feature>
<proteinExistence type="inferred from homology"/>